<sequence length="98" mass="11159">MNAERLMQVILAPIVTEKATFVAEKNQQVAFRVVADATKPEIKAAVELLFKVQVESVQVLNRKGKVKRFGRFVGRRRNERKAYVALKDGQEIDFAEVK</sequence>
<keyword id="KW-1185">Reference proteome</keyword>
<keyword id="KW-0687">Ribonucleoprotein</keyword>
<keyword id="KW-0689">Ribosomal protein</keyword>
<keyword id="KW-0694">RNA-binding</keyword>
<keyword id="KW-0699">rRNA-binding</keyword>
<comment type="function">
    <text evidence="1">One of the early assembly proteins it binds 23S rRNA. One of the proteins that surrounds the polypeptide exit tunnel on the outside of the ribosome. Forms the main docking site for trigger factor binding to the ribosome.</text>
</comment>
<comment type="subunit">
    <text evidence="1">Part of the 50S ribosomal subunit. Contacts protein L29, and trigger factor when it is bound to the ribosome.</text>
</comment>
<comment type="similarity">
    <text evidence="1">Belongs to the universal ribosomal protein uL23 family.</text>
</comment>
<evidence type="ECO:0000255" key="1">
    <source>
        <dbReference type="HAMAP-Rule" id="MF_01369"/>
    </source>
</evidence>
<evidence type="ECO:0000305" key="2"/>
<proteinExistence type="inferred from homology"/>
<name>RL23_BORPE</name>
<reference key="1">
    <citation type="journal article" date="2003" name="Nat. Genet.">
        <title>Comparative analysis of the genome sequences of Bordetella pertussis, Bordetella parapertussis and Bordetella bronchiseptica.</title>
        <authorList>
            <person name="Parkhill J."/>
            <person name="Sebaihia M."/>
            <person name="Preston A."/>
            <person name="Murphy L.D."/>
            <person name="Thomson N.R."/>
            <person name="Harris D.E."/>
            <person name="Holden M.T.G."/>
            <person name="Churcher C.M."/>
            <person name="Bentley S.D."/>
            <person name="Mungall K.L."/>
            <person name="Cerdeno-Tarraga A.-M."/>
            <person name="Temple L."/>
            <person name="James K.D."/>
            <person name="Harris B."/>
            <person name="Quail M.A."/>
            <person name="Achtman M."/>
            <person name="Atkin R."/>
            <person name="Baker S."/>
            <person name="Basham D."/>
            <person name="Bason N."/>
            <person name="Cherevach I."/>
            <person name="Chillingworth T."/>
            <person name="Collins M."/>
            <person name="Cronin A."/>
            <person name="Davis P."/>
            <person name="Doggett J."/>
            <person name="Feltwell T."/>
            <person name="Goble A."/>
            <person name="Hamlin N."/>
            <person name="Hauser H."/>
            <person name="Holroyd S."/>
            <person name="Jagels K."/>
            <person name="Leather S."/>
            <person name="Moule S."/>
            <person name="Norberczak H."/>
            <person name="O'Neil S."/>
            <person name="Ormond D."/>
            <person name="Price C."/>
            <person name="Rabbinowitsch E."/>
            <person name="Rutter S."/>
            <person name="Sanders M."/>
            <person name="Saunders D."/>
            <person name="Seeger K."/>
            <person name="Sharp S."/>
            <person name="Simmonds M."/>
            <person name="Skelton J."/>
            <person name="Squares R."/>
            <person name="Squares S."/>
            <person name="Stevens K."/>
            <person name="Unwin L."/>
            <person name="Whitehead S."/>
            <person name="Barrell B.G."/>
            <person name="Maskell D.J."/>
        </authorList>
    </citation>
    <scope>NUCLEOTIDE SEQUENCE [LARGE SCALE GENOMIC DNA]</scope>
    <source>
        <strain>Tohama I / ATCC BAA-589 / NCTC 13251</strain>
    </source>
</reference>
<feature type="chain" id="PRO_0000272713" description="Large ribosomal subunit protein uL23">
    <location>
        <begin position="1"/>
        <end position="98"/>
    </location>
</feature>
<dbReference type="EMBL" id="BX640422">
    <property type="protein sequence ID" value="CAE43873.1"/>
    <property type="molecule type" value="Genomic_DNA"/>
</dbReference>
<dbReference type="RefSeq" id="NP_882125.1">
    <property type="nucleotide sequence ID" value="NC_002929.2"/>
</dbReference>
<dbReference type="RefSeq" id="WP_003806906.1">
    <property type="nucleotide sequence ID" value="NZ_CP039022.1"/>
</dbReference>
<dbReference type="SMR" id="Q7VTD1"/>
<dbReference type="STRING" id="257313.BP3615"/>
<dbReference type="PaxDb" id="257313-BP3615"/>
<dbReference type="GeneID" id="93206260"/>
<dbReference type="KEGG" id="bpe:BP3615"/>
<dbReference type="PATRIC" id="fig|257313.5.peg.3913"/>
<dbReference type="eggNOG" id="COG0089">
    <property type="taxonomic scope" value="Bacteria"/>
</dbReference>
<dbReference type="HOGENOM" id="CLU_037562_3_1_4"/>
<dbReference type="Proteomes" id="UP000002676">
    <property type="component" value="Chromosome"/>
</dbReference>
<dbReference type="GO" id="GO:1990904">
    <property type="term" value="C:ribonucleoprotein complex"/>
    <property type="evidence" value="ECO:0007669"/>
    <property type="project" value="UniProtKB-KW"/>
</dbReference>
<dbReference type="GO" id="GO:0005840">
    <property type="term" value="C:ribosome"/>
    <property type="evidence" value="ECO:0007669"/>
    <property type="project" value="UniProtKB-KW"/>
</dbReference>
<dbReference type="GO" id="GO:0019843">
    <property type="term" value="F:rRNA binding"/>
    <property type="evidence" value="ECO:0007669"/>
    <property type="project" value="UniProtKB-UniRule"/>
</dbReference>
<dbReference type="GO" id="GO:0003735">
    <property type="term" value="F:structural constituent of ribosome"/>
    <property type="evidence" value="ECO:0007669"/>
    <property type="project" value="InterPro"/>
</dbReference>
<dbReference type="GO" id="GO:0006412">
    <property type="term" value="P:translation"/>
    <property type="evidence" value="ECO:0007669"/>
    <property type="project" value="UniProtKB-UniRule"/>
</dbReference>
<dbReference type="FunFam" id="3.30.70.330:FF:000001">
    <property type="entry name" value="50S ribosomal protein L23"/>
    <property type="match status" value="1"/>
</dbReference>
<dbReference type="Gene3D" id="3.30.70.330">
    <property type="match status" value="1"/>
</dbReference>
<dbReference type="HAMAP" id="MF_01369_B">
    <property type="entry name" value="Ribosomal_uL23_B"/>
    <property type="match status" value="1"/>
</dbReference>
<dbReference type="InterPro" id="IPR012677">
    <property type="entry name" value="Nucleotide-bd_a/b_plait_sf"/>
</dbReference>
<dbReference type="InterPro" id="IPR013025">
    <property type="entry name" value="Ribosomal_uL23-like"/>
</dbReference>
<dbReference type="InterPro" id="IPR012678">
    <property type="entry name" value="Ribosomal_uL23/eL15/eS24_sf"/>
</dbReference>
<dbReference type="NCBIfam" id="NF004359">
    <property type="entry name" value="PRK05738.1-3"/>
    <property type="match status" value="1"/>
</dbReference>
<dbReference type="NCBIfam" id="NF004363">
    <property type="entry name" value="PRK05738.2-4"/>
    <property type="match status" value="1"/>
</dbReference>
<dbReference type="PANTHER" id="PTHR11620">
    <property type="entry name" value="60S RIBOSOMAL PROTEIN L23A"/>
    <property type="match status" value="1"/>
</dbReference>
<dbReference type="Pfam" id="PF00276">
    <property type="entry name" value="Ribosomal_L23"/>
    <property type="match status" value="1"/>
</dbReference>
<dbReference type="SUPFAM" id="SSF54189">
    <property type="entry name" value="Ribosomal proteins S24e, L23 and L15e"/>
    <property type="match status" value="1"/>
</dbReference>
<accession>Q7VTD1</accession>
<gene>
    <name evidence="1" type="primary">rplW</name>
    <name type="ordered locus">BP3615</name>
</gene>
<organism>
    <name type="scientific">Bordetella pertussis (strain Tohama I / ATCC BAA-589 / NCTC 13251)</name>
    <dbReference type="NCBI Taxonomy" id="257313"/>
    <lineage>
        <taxon>Bacteria</taxon>
        <taxon>Pseudomonadati</taxon>
        <taxon>Pseudomonadota</taxon>
        <taxon>Betaproteobacteria</taxon>
        <taxon>Burkholderiales</taxon>
        <taxon>Alcaligenaceae</taxon>
        <taxon>Bordetella</taxon>
    </lineage>
</organism>
<protein>
    <recommendedName>
        <fullName evidence="1">Large ribosomal subunit protein uL23</fullName>
    </recommendedName>
    <alternativeName>
        <fullName evidence="2">50S ribosomal protein L23</fullName>
    </alternativeName>
</protein>